<evidence type="ECO:0000255" key="1">
    <source>
        <dbReference type="HAMAP-Rule" id="MF_00636"/>
    </source>
</evidence>
<comment type="function">
    <text evidence="1">Displays ATPase and GTPase activities.</text>
</comment>
<comment type="similarity">
    <text evidence="1">Belongs to the RapZ-like family.</text>
</comment>
<keyword id="KW-0067">ATP-binding</keyword>
<keyword id="KW-0342">GTP-binding</keyword>
<keyword id="KW-0547">Nucleotide-binding</keyword>
<feature type="chain" id="PRO_1000130772" description="Nucleotide-binding protein PLES_48441">
    <location>
        <begin position="1"/>
        <end position="286"/>
    </location>
</feature>
<feature type="binding site" evidence="1">
    <location>
        <begin position="8"/>
        <end position="15"/>
    </location>
    <ligand>
        <name>ATP</name>
        <dbReference type="ChEBI" id="CHEBI:30616"/>
    </ligand>
</feature>
<feature type="binding site" evidence="1">
    <location>
        <begin position="60"/>
        <end position="63"/>
    </location>
    <ligand>
        <name>GTP</name>
        <dbReference type="ChEBI" id="CHEBI:37565"/>
    </ligand>
</feature>
<accession>B7V004</accession>
<gene>
    <name type="ordered locus">PLES_48441</name>
</gene>
<protein>
    <recommendedName>
        <fullName evidence="1">Nucleotide-binding protein PLES_48441</fullName>
    </recommendedName>
</protein>
<reference key="1">
    <citation type="journal article" date="2009" name="Genome Res.">
        <title>Newly introduced genomic prophage islands are critical determinants of in vivo competitiveness in the Liverpool epidemic strain of Pseudomonas aeruginosa.</title>
        <authorList>
            <person name="Winstanley C."/>
            <person name="Langille M.G.I."/>
            <person name="Fothergill J.L."/>
            <person name="Kukavica-Ibrulj I."/>
            <person name="Paradis-Bleau C."/>
            <person name="Sanschagrin F."/>
            <person name="Thomson N.R."/>
            <person name="Winsor G.L."/>
            <person name="Quail M.A."/>
            <person name="Lennard N."/>
            <person name="Bignell A."/>
            <person name="Clarke L."/>
            <person name="Seeger K."/>
            <person name="Saunders D."/>
            <person name="Harris D."/>
            <person name="Parkhill J."/>
            <person name="Hancock R.E.W."/>
            <person name="Brinkman F.S.L."/>
            <person name="Levesque R.C."/>
        </authorList>
    </citation>
    <scope>NUCLEOTIDE SEQUENCE [LARGE SCALE GENOMIC DNA]</scope>
    <source>
        <strain>LESB58</strain>
    </source>
</reference>
<name>Y4844_PSEA8</name>
<organism>
    <name type="scientific">Pseudomonas aeruginosa (strain LESB58)</name>
    <dbReference type="NCBI Taxonomy" id="557722"/>
    <lineage>
        <taxon>Bacteria</taxon>
        <taxon>Pseudomonadati</taxon>
        <taxon>Pseudomonadota</taxon>
        <taxon>Gammaproteobacteria</taxon>
        <taxon>Pseudomonadales</taxon>
        <taxon>Pseudomonadaceae</taxon>
        <taxon>Pseudomonas</taxon>
    </lineage>
</organism>
<proteinExistence type="inferred from homology"/>
<sequence>MRLIIVSGRSGSGKSTALNVLEDNGFYCIDNLPASLLPDLAQRALLHTELLQPQVAVSIDARNLPSQLQRFPELLQEVRDNHINCDVLYLDADDETLLKRFSETRRRHPLTTDTRSLAEAIGDESQLLGPIADLADLKLDTTSLNLYQLRDTIKLRLLNKPEPGTAFLVESFGFKRGMPVDADLVFDVRCLPNPYWKPELRDHSGLEPEVREYLAAQPDVEEMYQDIVGYLNKWLPRFAASNRSYVTVAIGCTGGHHRSVYLAERIGAALRDSLKNVQIRHRDLSS</sequence>
<dbReference type="EMBL" id="FM209186">
    <property type="protein sequence ID" value="CAW29598.1"/>
    <property type="molecule type" value="Genomic_DNA"/>
</dbReference>
<dbReference type="SMR" id="B7V004"/>
<dbReference type="KEGG" id="pag:PLES_48441"/>
<dbReference type="HOGENOM" id="CLU_059558_1_1_6"/>
<dbReference type="GO" id="GO:0005524">
    <property type="term" value="F:ATP binding"/>
    <property type="evidence" value="ECO:0007669"/>
    <property type="project" value="UniProtKB-UniRule"/>
</dbReference>
<dbReference type="GO" id="GO:0005525">
    <property type="term" value="F:GTP binding"/>
    <property type="evidence" value="ECO:0007669"/>
    <property type="project" value="UniProtKB-UniRule"/>
</dbReference>
<dbReference type="Gene3D" id="3.40.50.300">
    <property type="entry name" value="P-loop containing nucleotide triphosphate hydrolases"/>
    <property type="match status" value="1"/>
</dbReference>
<dbReference type="HAMAP" id="MF_00636">
    <property type="entry name" value="RapZ_like"/>
    <property type="match status" value="1"/>
</dbReference>
<dbReference type="InterPro" id="IPR027417">
    <property type="entry name" value="P-loop_NTPase"/>
</dbReference>
<dbReference type="InterPro" id="IPR005337">
    <property type="entry name" value="RapZ-like"/>
</dbReference>
<dbReference type="InterPro" id="IPR053930">
    <property type="entry name" value="RapZ-like_N"/>
</dbReference>
<dbReference type="InterPro" id="IPR053931">
    <property type="entry name" value="RapZ_C"/>
</dbReference>
<dbReference type="NCBIfam" id="NF003828">
    <property type="entry name" value="PRK05416.1"/>
    <property type="match status" value="1"/>
</dbReference>
<dbReference type="PANTHER" id="PTHR30448">
    <property type="entry name" value="RNASE ADAPTER PROTEIN RAPZ"/>
    <property type="match status" value="1"/>
</dbReference>
<dbReference type="PANTHER" id="PTHR30448:SF0">
    <property type="entry name" value="RNASE ADAPTER PROTEIN RAPZ"/>
    <property type="match status" value="1"/>
</dbReference>
<dbReference type="Pfam" id="PF22740">
    <property type="entry name" value="PapZ_C"/>
    <property type="match status" value="1"/>
</dbReference>
<dbReference type="Pfam" id="PF03668">
    <property type="entry name" value="RapZ-like_N"/>
    <property type="match status" value="1"/>
</dbReference>
<dbReference type="PIRSF" id="PIRSF005052">
    <property type="entry name" value="P-loopkin"/>
    <property type="match status" value="1"/>
</dbReference>
<dbReference type="SUPFAM" id="SSF52540">
    <property type="entry name" value="P-loop containing nucleoside triphosphate hydrolases"/>
    <property type="match status" value="1"/>
</dbReference>